<proteinExistence type="inferred from homology"/>
<accession>Q3C1J9</accession>
<name>NDHJ_NICSY</name>
<protein>
    <recommendedName>
        <fullName evidence="1">NAD(P)H-quinone oxidoreductase subunit J, chloroplastic</fullName>
        <ecNumber evidence="1">7.1.1.-</ecNumber>
    </recommendedName>
    <alternativeName>
        <fullName>NAD(P)H dehydrogenase subunit J</fullName>
    </alternativeName>
    <alternativeName>
        <fullName evidence="1">NADH-plastoquinone oxidoreductase subunit J</fullName>
    </alternativeName>
</protein>
<feature type="chain" id="PRO_0000358285" description="NAD(P)H-quinone oxidoreductase subunit J, chloroplastic">
    <location>
        <begin position="1"/>
        <end position="158"/>
    </location>
</feature>
<keyword id="KW-0150">Chloroplast</keyword>
<keyword id="KW-0472">Membrane</keyword>
<keyword id="KW-0520">NAD</keyword>
<keyword id="KW-0521">NADP</keyword>
<keyword id="KW-0934">Plastid</keyword>
<keyword id="KW-0618">Plastoquinone</keyword>
<keyword id="KW-0874">Quinone</keyword>
<keyword id="KW-1185">Reference proteome</keyword>
<keyword id="KW-0793">Thylakoid</keyword>
<keyword id="KW-1278">Translocase</keyword>
<keyword id="KW-0813">Transport</keyword>
<organism>
    <name type="scientific">Nicotiana sylvestris</name>
    <name type="common">Wood tobacco</name>
    <name type="synonym">South American tobacco</name>
    <dbReference type="NCBI Taxonomy" id="4096"/>
    <lineage>
        <taxon>Eukaryota</taxon>
        <taxon>Viridiplantae</taxon>
        <taxon>Streptophyta</taxon>
        <taxon>Embryophyta</taxon>
        <taxon>Tracheophyta</taxon>
        <taxon>Spermatophyta</taxon>
        <taxon>Magnoliopsida</taxon>
        <taxon>eudicotyledons</taxon>
        <taxon>Gunneridae</taxon>
        <taxon>Pentapetalae</taxon>
        <taxon>asterids</taxon>
        <taxon>lamiids</taxon>
        <taxon>Solanales</taxon>
        <taxon>Solanaceae</taxon>
        <taxon>Nicotianoideae</taxon>
        <taxon>Nicotianeae</taxon>
        <taxon>Nicotiana</taxon>
    </lineage>
</organism>
<gene>
    <name evidence="1" type="primary">ndhJ</name>
</gene>
<evidence type="ECO:0000255" key="1">
    <source>
        <dbReference type="HAMAP-Rule" id="MF_01357"/>
    </source>
</evidence>
<reference key="1">
    <citation type="journal article" date="2006" name="Mol. Genet. Genomics">
        <title>The chloroplast genome of Nicotiana sylvestris and Nicotiana tomentosiformis: complete sequencing confirms that the Nicotiana sylvestris progenitor is the maternal genome donor of Nicotiana tabacum.</title>
        <authorList>
            <person name="Yukawa M."/>
            <person name="Tsudzuki T."/>
            <person name="Sugiura M."/>
        </authorList>
    </citation>
    <scope>NUCLEOTIDE SEQUENCE [LARGE SCALE GENOMIC DNA]</scope>
</reference>
<geneLocation type="chloroplast"/>
<comment type="function">
    <text evidence="1">NDH shuttles electrons from NAD(P)H:plastoquinone, via FMN and iron-sulfur (Fe-S) centers, to quinones in the photosynthetic chain and possibly in a chloroplast respiratory chain. The immediate electron acceptor for the enzyme in this species is believed to be plastoquinone. Couples the redox reaction to proton translocation, and thus conserves the redox energy in a proton gradient.</text>
</comment>
<comment type="catalytic activity">
    <reaction evidence="1">
        <text>a plastoquinone + NADH + (n+1) H(+)(in) = a plastoquinol + NAD(+) + n H(+)(out)</text>
        <dbReference type="Rhea" id="RHEA:42608"/>
        <dbReference type="Rhea" id="RHEA-COMP:9561"/>
        <dbReference type="Rhea" id="RHEA-COMP:9562"/>
        <dbReference type="ChEBI" id="CHEBI:15378"/>
        <dbReference type="ChEBI" id="CHEBI:17757"/>
        <dbReference type="ChEBI" id="CHEBI:57540"/>
        <dbReference type="ChEBI" id="CHEBI:57945"/>
        <dbReference type="ChEBI" id="CHEBI:62192"/>
    </reaction>
</comment>
<comment type="catalytic activity">
    <reaction evidence="1">
        <text>a plastoquinone + NADPH + (n+1) H(+)(in) = a plastoquinol + NADP(+) + n H(+)(out)</text>
        <dbReference type="Rhea" id="RHEA:42612"/>
        <dbReference type="Rhea" id="RHEA-COMP:9561"/>
        <dbReference type="Rhea" id="RHEA-COMP:9562"/>
        <dbReference type="ChEBI" id="CHEBI:15378"/>
        <dbReference type="ChEBI" id="CHEBI:17757"/>
        <dbReference type="ChEBI" id="CHEBI:57783"/>
        <dbReference type="ChEBI" id="CHEBI:58349"/>
        <dbReference type="ChEBI" id="CHEBI:62192"/>
    </reaction>
</comment>
<comment type="subunit">
    <text evidence="1">NDH is composed of at least 16 different subunits, 5 of which are encoded in the nucleus.</text>
</comment>
<comment type="subcellular location">
    <subcellularLocation>
        <location evidence="1">Plastid</location>
        <location evidence="1">Chloroplast thylakoid membrane</location>
        <topology evidence="1">Peripheral membrane protein</topology>
        <orientation evidence="1">Stromal side</orientation>
    </subcellularLocation>
</comment>
<comment type="similarity">
    <text evidence="1">Belongs to the complex I 30 kDa subunit family.</text>
</comment>
<dbReference type="EC" id="7.1.1.-" evidence="1"/>
<dbReference type="EMBL" id="AB237912">
    <property type="protein sequence ID" value="BAE46654.1"/>
    <property type="molecule type" value="Genomic_DNA"/>
</dbReference>
<dbReference type="RefSeq" id="YP_358679.1">
    <property type="nucleotide sequence ID" value="NC_007500.1"/>
</dbReference>
<dbReference type="SMR" id="Q3C1J9"/>
<dbReference type="GeneID" id="3735068"/>
<dbReference type="KEGG" id="nsy:3735068"/>
<dbReference type="OrthoDB" id="17065at4085"/>
<dbReference type="Proteomes" id="UP000189701">
    <property type="component" value="Chloroplast Pltd"/>
</dbReference>
<dbReference type="GO" id="GO:0009535">
    <property type="term" value="C:chloroplast thylakoid membrane"/>
    <property type="evidence" value="ECO:0007669"/>
    <property type="project" value="UniProtKB-SubCell"/>
</dbReference>
<dbReference type="GO" id="GO:0008137">
    <property type="term" value="F:NADH dehydrogenase (ubiquinone) activity"/>
    <property type="evidence" value="ECO:0007669"/>
    <property type="project" value="InterPro"/>
</dbReference>
<dbReference type="GO" id="GO:0048038">
    <property type="term" value="F:quinone binding"/>
    <property type="evidence" value="ECO:0007669"/>
    <property type="project" value="UniProtKB-KW"/>
</dbReference>
<dbReference type="GO" id="GO:0019684">
    <property type="term" value="P:photosynthesis, light reaction"/>
    <property type="evidence" value="ECO:0007669"/>
    <property type="project" value="UniProtKB-UniRule"/>
</dbReference>
<dbReference type="FunFam" id="3.30.460.80:FF:000004">
    <property type="entry name" value="NAD(P)H-quinone oxidoreductase subunit J, chloroplastic"/>
    <property type="match status" value="1"/>
</dbReference>
<dbReference type="Gene3D" id="3.30.460.80">
    <property type="entry name" value="NADH:ubiquinone oxidoreductase, 30kDa subunit"/>
    <property type="match status" value="1"/>
</dbReference>
<dbReference type="HAMAP" id="MF_01357">
    <property type="entry name" value="NDH1_NuoC"/>
    <property type="match status" value="1"/>
</dbReference>
<dbReference type="InterPro" id="IPR010218">
    <property type="entry name" value="NADH_DH_suC"/>
</dbReference>
<dbReference type="InterPro" id="IPR037232">
    <property type="entry name" value="NADH_quin_OxRdtase_su_C/D-like"/>
</dbReference>
<dbReference type="InterPro" id="IPR001268">
    <property type="entry name" value="NADH_UbQ_OxRdtase_30kDa_su"/>
</dbReference>
<dbReference type="InterPro" id="IPR020396">
    <property type="entry name" value="NADH_UbQ_OxRdtase_CS"/>
</dbReference>
<dbReference type="NCBIfam" id="NF009141">
    <property type="entry name" value="PRK12494.1"/>
    <property type="match status" value="1"/>
</dbReference>
<dbReference type="PANTHER" id="PTHR10884:SF14">
    <property type="entry name" value="NADH DEHYDROGENASE [UBIQUINONE] IRON-SULFUR PROTEIN 3, MITOCHONDRIAL"/>
    <property type="match status" value="1"/>
</dbReference>
<dbReference type="PANTHER" id="PTHR10884">
    <property type="entry name" value="NADH DEHYDROGENASE UBIQUINONE IRON-SULFUR PROTEIN 3"/>
    <property type="match status" value="1"/>
</dbReference>
<dbReference type="Pfam" id="PF00329">
    <property type="entry name" value="Complex1_30kDa"/>
    <property type="match status" value="1"/>
</dbReference>
<dbReference type="SUPFAM" id="SSF143243">
    <property type="entry name" value="Nqo5-like"/>
    <property type="match status" value="1"/>
</dbReference>
<dbReference type="PROSITE" id="PS00542">
    <property type="entry name" value="COMPLEX1_30K"/>
    <property type="match status" value="1"/>
</dbReference>
<sequence>MQGRLSAWLVKHGLIHRSLGFDYQGIETLQIKPEDWHSIAVIFYVYGYNYLRSQCAYDVAPGGLLASVYHLTRIEDGVDQPEEVCIKVFASRRNPRIPSVFWVWKSVDFQERESYDMLGISYDNHPRLKRILMPESWIGWPLRKDYIAPNFYEIQDAH</sequence>